<reference key="1">
    <citation type="book" date="2006" name="Gram positive pathogens, 2nd edition">
        <title>The Staphylococcus aureus NCTC 8325 genome.</title>
        <editorList>
            <person name="Fischetti V."/>
            <person name="Novick R."/>
            <person name="Ferretti J."/>
            <person name="Portnoy D."/>
            <person name="Rood J."/>
        </editorList>
        <authorList>
            <person name="Gillaspy A.F."/>
            <person name="Worrell V."/>
            <person name="Orvis J."/>
            <person name="Roe B.A."/>
            <person name="Dyer D.W."/>
            <person name="Iandolo J.J."/>
        </authorList>
    </citation>
    <scope>NUCLEOTIDE SEQUENCE [LARGE SCALE GENOMIC DNA]</scope>
    <source>
        <strain>NCTC 8325 / PS 47</strain>
    </source>
</reference>
<organism>
    <name type="scientific">Staphylococcus aureus (strain NCTC 8325 / PS 47)</name>
    <dbReference type="NCBI Taxonomy" id="93061"/>
    <lineage>
        <taxon>Bacteria</taxon>
        <taxon>Bacillati</taxon>
        <taxon>Bacillota</taxon>
        <taxon>Bacilli</taxon>
        <taxon>Bacillales</taxon>
        <taxon>Staphylococcaceae</taxon>
        <taxon>Staphylococcus</taxon>
    </lineage>
</organism>
<proteinExistence type="inferred from homology"/>
<comment type="function">
    <text evidence="1">Acts as a chaperone.</text>
</comment>
<comment type="induction">
    <text evidence="1">By stress conditions e.g. heat shock.</text>
</comment>
<comment type="similarity">
    <text evidence="1">Belongs to the heat shock protein 70 family.</text>
</comment>
<dbReference type="EMBL" id="CP000253">
    <property type="protein sequence ID" value="ABD30757.1"/>
    <property type="molecule type" value="Genomic_DNA"/>
</dbReference>
<dbReference type="RefSeq" id="WP_000034716.1">
    <property type="nucleotide sequence ID" value="NZ_LS483365.1"/>
</dbReference>
<dbReference type="RefSeq" id="YP_500193.1">
    <property type="nucleotide sequence ID" value="NC_007795.1"/>
</dbReference>
<dbReference type="SMR" id="Q2FXZ2"/>
<dbReference type="STRING" id="93061.SAOUHSC_01683"/>
<dbReference type="PaxDb" id="1280-SAXN108_1606"/>
<dbReference type="GeneID" id="3921795"/>
<dbReference type="KEGG" id="sao:SAOUHSC_01683"/>
<dbReference type="PATRIC" id="fig|93061.5.peg.1531"/>
<dbReference type="eggNOG" id="COG0443">
    <property type="taxonomic scope" value="Bacteria"/>
</dbReference>
<dbReference type="HOGENOM" id="CLU_005965_2_4_9"/>
<dbReference type="OrthoDB" id="9766019at2"/>
<dbReference type="PRO" id="PR:Q2FXZ2"/>
<dbReference type="Proteomes" id="UP000008816">
    <property type="component" value="Chromosome"/>
</dbReference>
<dbReference type="GO" id="GO:0005524">
    <property type="term" value="F:ATP binding"/>
    <property type="evidence" value="ECO:0007669"/>
    <property type="project" value="UniProtKB-UniRule"/>
</dbReference>
<dbReference type="GO" id="GO:0016887">
    <property type="term" value="F:ATP hydrolysis activity"/>
    <property type="evidence" value="ECO:0000318"/>
    <property type="project" value="GO_Central"/>
</dbReference>
<dbReference type="GO" id="GO:0140662">
    <property type="term" value="F:ATP-dependent protein folding chaperone"/>
    <property type="evidence" value="ECO:0007669"/>
    <property type="project" value="InterPro"/>
</dbReference>
<dbReference type="GO" id="GO:0031072">
    <property type="term" value="F:heat shock protein binding"/>
    <property type="evidence" value="ECO:0000318"/>
    <property type="project" value="GO_Central"/>
</dbReference>
<dbReference type="GO" id="GO:0044183">
    <property type="term" value="F:protein folding chaperone"/>
    <property type="evidence" value="ECO:0000318"/>
    <property type="project" value="GO_Central"/>
</dbReference>
<dbReference type="GO" id="GO:0051082">
    <property type="term" value="F:unfolded protein binding"/>
    <property type="evidence" value="ECO:0007669"/>
    <property type="project" value="InterPro"/>
</dbReference>
<dbReference type="GO" id="GO:0051085">
    <property type="term" value="P:chaperone cofactor-dependent protein refolding"/>
    <property type="evidence" value="ECO:0000318"/>
    <property type="project" value="GO_Central"/>
</dbReference>
<dbReference type="GO" id="GO:0042026">
    <property type="term" value="P:protein refolding"/>
    <property type="evidence" value="ECO:0000318"/>
    <property type="project" value="GO_Central"/>
</dbReference>
<dbReference type="CDD" id="cd10234">
    <property type="entry name" value="ASKHA_NBD_HSP70_DnaK-like"/>
    <property type="match status" value="1"/>
</dbReference>
<dbReference type="FunFam" id="2.60.34.10:FF:000014">
    <property type="entry name" value="Chaperone protein DnaK HSP70"/>
    <property type="match status" value="1"/>
</dbReference>
<dbReference type="FunFam" id="1.20.1270.10:FF:000001">
    <property type="entry name" value="Molecular chaperone DnaK"/>
    <property type="match status" value="1"/>
</dbReference>
<dbReference type="FunFam" id="3.30.420.40:FF:000071">
    <property type="entry name" value="Molecular chaperone DnaK"/>
    <property type="match status" value="1"/>
</dbReference>
<dbReference type="FunFam" id="3.90.640.10:FF:000003">
    <property type="entry name" value="Molecular chaperone DnaK"/>
    <property type="match status" value="1"/>
</dbReference>
<dbReference type="Gene3D" id="1.20.1270.10">
    <property type="match status" value="1"/>
</dbReference>
<dbReference type="Gene3D" id="3.30.420.40">
    <property type="match status" value="2"/>
</dbReference>
<dbReference type="Gene3D" id="3.90.640.10">
    <property type="entry name" value="Actin, Chain A, domain 4"/>
    <property type="match status" value="1"/>
</dbReference>
<dbReference type="Gene3D" id="2.60.34.10">
    <property type="entry name" value="Substrate Binding Domain Of DNAk, Chain A, domain 1"/>
    <property type="match status" value="1"/>
</dbReference>
<dbReference type="HAMAP" id="MF_00332">
    <property type="entry name" value="DnaK"/>
    <property type="match status" value="1"/>
</dbReference>
<dbReference type="InterPro" id="IPR043129">
    <property type="entry name" value="ATPase_NBD"/>
</dbReference>
<dbReference type="InterPro" id="IPR012725">
    <property type="entry name" value="Chaperone_DnaK"/>
</dbReference>
<dbReference type="InterPro" id="IPR018181">
    <property type="entry name" value="Heat_shock_70_CS"/>
</dbReference>
<dbReference type="InterPro" id="IPR029048">
    <property type="entry name" value="HSP70_C_sf"/>
</dbReference>
<dbReference type="InterPro" id="IPR029047">
    <property type="entry name" value="HSP70_peptide-bd_sf"/>
</dbReference>
<dbReference type="InterPro" id="IPR013126">
    <property type="entry name" value="Hsp_70_fam"/>
</dbReference>
<dbReference type="NCBIfam" id="NF001413">
    <property type="entry name" value="PRK00290.1"/>
    <property type="match status" value="1"/>
</dbReference>
<dbReference type="NCBIfam" id="TIGR02350">
    <property type="entry name" value="prok_dnaK"/>
    <property type="match status" value="1"/>
</dbReference>
<dbReference type="PANTHER" id="PTHR19375">
    <property type="entry name" value="HEAT SHOCK PROTEIN 70KDA"/>
    <property type="match status" value="1"/>
</dbReference>
<dbReference type="Pfam" id="PF00012">
    <property type="entry name" value="HSP70"/>
    <property type="match status" value="1"/>
</dbReference>
<dbReference type="PRINTS" id="PR00301">
    <property type="entry name" value="HEATSHOCK70"/>
</dbReference>
<dbReference type="SUPFAM" id="SSF53067">
    <property type="entry name" value="Actin-like ATPase domain"/>
    <property type="match status" value="2"/>
</dbReference>
<dbReference type="SUPFAM" id="SSF100934">
    <property type="entry name" value="Heat shock protein 70kD (HSP70), C-terminal subdomain"/>
    <property type="match status" value="1"/>
</dbReference>
<dbReference type="SUPFAM" id="SSF100920">
    <property type="entry name" value="Heat shock protein 70kD (HSP70), peptide-binding domain"/>
    <property type="match status" value="1"/>
</dbReference>
<dbReference type="PROSITE" id="PS00297">
    <property type="entry name" value="HSP70_1"/>
    <property type="match status" value="1"/>
</dbReference>
<dbReference type="PROSITE" id="PS00329">
    <property type="entry name" value="HSP70_2"/>
    <property type="match status" value="1"/>
</dbReference>
<dbReference type="PROSITE" id="PS01036">
    <property type="entry name" value="HSP70_3"/>
    <property type="match status" value="1"/>
</dbReference>
<feature type="chain" id="PRO_1000059677" description="Chaperone protein DnaK">
    <location>
        <begin position="1"/>
        <end position="610"/>
    </location>
</feature>
<feature type="region of interest" description="Disordered" evidence="2">
    <location>
        <begin position="525"/>
        <end position="544"/>
    </location>
</feature>
<feature type="region of interest" description="Disordered" evidence="2">
    <location>
        <begin position="576"/>
        <end position="610"/>
    </location>
</feature>
<feature type="compositionally biased region" description="Basic and acidic residues" evidence="2">
    <location>
        <begin position="529"/>
        <end position="542"/>
    </location>
</feature>
<feature type="compositionally biased region" description="Low complexity" evidence="2">
    <location>
        <begin position="576"/>
        <end position="592"/>
    </location>
</feature>
<feature type="compositionally biased region" description="Basic and acidic residues" evidence="2">
    <location>
        <begin position="599"/>
        <end position="610"/>
    </location>
</feature>
<feature type="modified residue" description="Phosphothreonine; by autocatalysis" evidence="1">
    <location>
        <position position="173"/>
    </location>
</feature>
<gene>
    <name evidence="1" type="primary">dnaK</name>
    <name type="ordered locus">SAOUHSC_01683</name>
</gene>
<keyword id="KW-0067">ATP-binding</keyword>
<keyword id="KW-0143">Chaperone</keyword>
<keyword id="KW-0547">Nucleotide-binding</keyword>
<keyword id="KW-0597">Phosphoprotein</keyword>
<keyword id="KW-1185">Reference proteome</keyword>
<keyword id="KW-0346">Stress response</keyword>
<sequence length="610" mass="66361">MSKIIGIDLGTTNSCVTVLEGDEPKVIQNPEGSRTTPSVVAFKNGETQVGEVAKRQAITNPNTVQSIKRHMGTDYKVDIEGKSYTPQEISAMILQNLKNTAESYLGEKVDKAVITVPAYFNDAERQATKDAGKIAGLEVERIINEPTAAALAYGLDKTDKDEKVLVFDLGGGTFDVSILELGDGVFEVLSTAGDNKLGGDDFDQVIIDYLVAEFKKENGVDLSQDKMALQRLKDAAEKAKKDLSGVSQTQISLPFISAGENGPLHLEVNLTRSKFEELSDSLIRRTMEPTRQAMKDAGLTNSDIDEVILVGGSTRIPAVQEAVKKEIGKEPNKGVNPDEVVAMGAAIQGGVITGDVKDVVLLDVTPLSLGIEILGGRMNTLIERNTTIPTSKSQIYSTAVDNQPSVDVHVLQGERPMAADNKTLGRFQLTDIPPAERGKPQIEVTFDIDKNGIVNVTAKDLGTNKEQRITIQSSSSLSDEEIDRMVKDAEVNAEADKKRREEVDLRNEADSLVFQVEKTLTDLGENIGEEDKKSAEEKKDALKTALEGQDIEDIKSKKEELEKVIQELSAKVYEQAAQQQQQAQGANAGQNNDSTVEDAEFKEVKDDDKK</sequence>
<name>DNAK_STAA8</name>
<protein>
    <recommendedName>
        <fullName evidence="1">Chaperone protein DnaK</fullName>
    </recommendedName>
    <alternativeName>
        <fullName evidence="1">HSP70</fullName>
    </alternativeName>
    <alternativeName>
        <fullName evidence="1">Heat shock 70 kDa protein</fullName>
    </alternativeName>
    <alternativeName>
        <fullName evidence="1">Heat shock protein 70</fullName>
    </alternativeName>
</protein>
<evidence type="ECO:0000255" key="1">
    <source>
        <dbReference type="HAMAP-Rule" id="MF_00332"/>
    </source>
</evidence>
<evidence type="ECO:0000256" key="2">
    <source>
        <dbReference type="SAM" id="MobiDB-lite"/>
    </source>
</evidence>
<accession>Q2FXZ2</accession>